<dbReference type="EMBL" id="KM505046">
    <property type="protein sequence ID" value="AIZ95444.1"/>
    <property type="molecule type" value="Genomic_DNA"/>
</dbReference>
<dbReference type="SMR" id="A0A0D3MU50"/>
<dbReference type="FunCoup" id="A0A0D3MU50">
    <property type="interactions" value="612"/>
</dbReference>
<dbReference type="InParanoid" id="A0A0D3MU50"/>
<dbReference type="Proteomes" id="UP000089565">
    <property type="component" value="Unplaced"/>
</dbReference>
<dbReference type="Proteomes" id="UP000596662">
    <property type="component" value="Unplaced"/>
</dbReference>
<dbReference type="GO" id="GO:0009507">
    <property type="term" value="C:chloroplast"/>
    <property type="evidence" value="ECO:0000314"/>
    <property type="project" value="UniProtKB"/>
</dbReference>
<dbReference type="GO" id="GO:0031969">
    <property type="term" value="C:chloroplast membrane"/>
    <property type="evidence" value="ECO:0007669"/>
    <property type="project" value="UniProtKB-SubCell"/>
</dbReference>
<dbReference type="GO" id="GO:1904143">
    <property type="term" value="P:positive regulation of carotenoid biosynthetic process"/>
    <property type="evidence" value="ECO:0000315"/>
    <property type="project" value="UniProtKB"/>
</dbReference>
<dbReference type="PANTHER" id="PTHR15852:SF24">
    <property type="entry name" value="OS02G0651300 PROTEIN"/>
    <property type="match status" value="1"/>
</dbReference>
<dbReference type="PANTHER" id="PTHR15852">
    <property type="entry name" value="PLASTID TRANSCRIPTIONALLY ACTIVE PROTEIN"/>
    <property type="match status" value="1"/>
</dbReference>
<protein>
    <recommendedName>
        <fullName evidence="5">Protein ORANGE-ORANGE, chloroplastic</fullName>
        <shortName evidence="4">CmOr-orange</shortName>
    </recommendedName>
    <alternativeName>
        <fullName evidence="4">DnaJ-like cysteine-rich domain-containing protein Or</fullName>
    </alternativeName>
</protein>
<feature type="transit peptide" description="Chloroplast" evidence="1">
    <location>
        <begin position="1"/>
        <end position="54"/>
    </location>
</feature>
<feature type="chain" id="PRO_0000438016" description="Protein ORANGE-ORANGE, chloroplastic">
    <location>
        <begin position="55"/>
        <end position="325"/>
    </location>
</feature>
<feature type="transmembrane region" description="Helical" evidence="1">
    <location>
        <begin position="164"/>
        <end position="184"/>
    </location>
</feature>
<feature type="transmembrane region" description="Helical" evidence="1">
    <location>
        <begin position="217"/>
        <end position="237"/>
    </location>
</feature>
<feature type="repeat" description="CXXCXGXG motif" evidence="5">
    <location>
        <begin position="248"/>
        <end position="255"/>
    </location>
</feature>
<feature type="repeat" description="CXXCXXXG motif" evidence="5">
    <location>
        <begin position="259"/>
        <end position="266"/>
    </location>
</feature>
<feature type="repeat" description="CXXCXGXG motif" evidence="5">
    <location>
        <begin position="292"/>
        <end position="299"/>
    </location>
</feature>
<feature type="repeat" description="CXXCXXXG motif" evidence="5">
    <location>
        <begin position="303"/>
        <end position="310"/>
    </location>
</feature>
<feature type="region of interest" description="Disordered" evidence="2">
    <location>
        <begin position="53"/>
        <end position="77"/>
    </location>
</feature>
<feature type="region of interest" description="CR-type-like" evidence="5">
    <location>
        <begin position="226"/>
        <end position="317"/>
    </location>
</feature>
<feature type="compositionally biased region" description="Low complexity" evidence="2">
    <location>
        <begin position="53"/>
        <end position="71"/>
    </location>
</feature>
<accession>A0A0D3MU50</accession>
<name>ORORA_CUCME</name>
<organism>
    <name type="scientific">Cucumis melo</name>
    <name type="common">Muskmelon</name>
    <dbReference type="NCBI Taxonomy" id="3656"/>
    <lineage>
        <taxon>Eukaryota</taxon>
        <taxon>Viridiplantae</taxon>
        <taxon>Streptophyta</taxon>
        <taxon>Embryophyta</taxon>
        <taxon>Tracheophyta</taxon>
        <taxon>Spermatophyta</taxon>
        <taxon>Magnoliopsida</taxon>
        <taxon>eudicotyledons</taxon>
        <taxon>Gunneridae</taxon>
        <taxon>Pentapetalae</taxon>
        <taxon>rosids</taxon>
        <taxon>fabids</taxon>
        <taxon>Cucurbitales</taxon>
        <taxon>Cucurbitaceae</taxon>
        <taxon>Benincaseae</taxon>
        <taxon>Cucumis</taxon>
    </lineage>
</organism>
<comment type="function">
    <text evidence="3">Triggers accumulation of carotenoids, mainly beta-carotene, in fruit flesh.</text>
</comment>
<comment type="subcellular location">
    <subcellularLocation>
        <location evidence="6">Plastid</location>
        <location evidence="6">Chloroplast membrane</location>
    </subcellularLocation>
</comment>
<comment type="developmental stage">
    <text evidence="3">Expression increases in fruit flesh during fruit development.</text>
</comment>
<comment type="polymorphism">
    <text evidence="6">The OR gene possesses two alleles in melon, one associated with orange flesh (this entry) and the second being associated with either white or green flesh (AC A0A0D3MU35). A single SNP between the two alleles causes a change of an evolutionarily highly conserved Arg in position 108 (AC A0A0D3MU35) to His (His-108). The Arg and His alleles are responsible for the non-orange and orange melon fruit phenotypes, respectively. This findings could serve as a novel genetic tool to enrich carotenoid content in transgenic crops.</text>
</comment>
<comment type="miscellaneous">
    <text evidence="5">Its sequence is related to the DnaJ family but lacks the J domain. The CR-type-like region is similar to CR-type zinc-fingers.</text>
</comment>
<comment type="similarity">
    <text>Belongs to the orange-like family.</text>
</comment>
<proteinExistence type="evidence at transcript level"/>
<evidence type="ECO:0000255" key="1"/>
<evidence type="ECO:0000256" key="2">
    <source>
        <dbReference type="SAM" id="MobiDB-lite"/>
    </source>
</evidence>
<evidence type="ECO:0000269" key="3">
    <source>
    </source>
</evidence>
<evidence type="ECO:0000303" key="4">
    <source>
    </source>
</evidence>
<evidence type="ECO:0000305" key="5"/>
<evidence type="ECO:0000305" key="6">
    <source>
    </source>
</evidence>
<reference key="1">
    <citation type="journal article" date="2015" name="Plant J.">
        <title>A 'golden' SNP in CmOr governs the fruit flesh color of melon (Cucumis melo).</title>
        <authorList>
            <person name="Tzuri G."/>
            <person name="Zhou X."/>
            <person name="Chayut N."/>
            <person name="Yuan H."/>
            <person name="Portnoy V."/>
            <person name="Meir A."/>
            <person name="Sa'ar U."/>
            <person name="Baumkoler F."/>
            <person name="Mazourek M."/>
            <person name="Lewinsohn E."/>
            <person name="Fei Z."/>
            <person name="Schaffer A.A."/>
            <person name="Li L."/>
            <person name="Burger J."/>
            <person name="Katzir N."/>
            <person name="Tadmor Y."/>
        </authorList>
    </citation>
    <scope>NUCLEOTIDE SEQUENCE [GENOMIC DNA]</scope>
    <scope>FUNCTION</scope>
    <scope>SUBCELLULAR LOCATION</scope>
    <scope>DEVELOPMENTAL STAGE</scope>
    <scope>POLYMORPHISM</scope>
</reference>
<keyword id="KW-0150">Chloroplast</keyword>
<keyword id="KW-0472">Membrane</keyword>
<keyword id="KW-0934">Plastid</keyword>
<keyword id="KW-1185">Reference proteome</keyword>
<keyword id="KW-0677">Repeat</keyword>
<keyword id="KW-0809">Transit peptide</keyword>
<keyword id="KW-0812">Transmembrane</keyword>
<keyword id="KW-1133">Transmembrane helix</keyword>
<gene>
    <name evidence="4" type="primary">OR</name>
</gene>
<sequence length="325" mass="36251">MDRVLVASYPINHLIRPHSFRIDYCWSTCFTSRLNSGKERQKLSSRWRWRSMASDSTDSSSSSSFAPSVESDPSDKTSASFCIIEGPETVQDFAKMELQEIQENIRSHRNKIFLHMEEVRRLRIQQRIKNAELGISKEERENELPNFPSFIPFLPPLSSENLKLYYVTCYSLIAGIILFGGLLAPTLELKLGLGGTSYEDFIRSVHLPMQLSQVDPIVASFSGGAVGVISALMVVEVNNVKQQEHKRCKYCLGTGYLACARCSNTGALVLIEPVSTLNGEHQPLSLPKTERCQNCSGSGKVMCPTCLCTGMAMASEHDPRIDPFD</sequence>